<organism>
    <name type="scientific">Burkholderia pseudomallei (strain 1106a)</name>
    <dbReference type="NCBI Taxonomy" id="357348"/>
    <lineage>
        <taxon>Bacteria</taxon>
        <taxon>Pseudomonadati</taxon>
        <taxon>Pseudomonadota</taxon>
        <taxon>Betaproteobacteria</taxon>
        <taxon>Burkholderiales</taxon>
        <taxon>Burkholderiaceae</taxon>
        <taxon>Burkholderia</taxon>
        <taxon>pseudomallei group</taxon>
    </lineage>
</organism>
<reference key="1">
    <citation type="journal article" date="2010" name="Genome Biol. Evol.">
        <title>Continuing evolution of Burkholderia mallei through genome reduction and large-scale rearrangements.</title>
        <authorList>
            <person name="Losada L."/>
            <person name="Ronning C.M."/>
            <person name="DeShazer D."/>
            <person name="Woods D."/>
            <person name="Fedorova N."/>
            <person name="Kim H.S."/>
            <person name="Shabalina S.A."/>
            <person name="Pearson T.R."/>
            <person name="Brinkac L."/>
            <person name="Tan P."/>
            <person name="Nandi T."/>
            <person name="Crabtree J."/>
            <person name="Badger J."/>
            <person name="Beckstrom-Sternberg S."/>
            <person name="Saqib M."/>
            <person name="Schutzer S.E."/>
            <person name="Keim P."/>
            <person name="Nierman W.C."/>
        </authorList>
    </citation>
    <scope>NUCLEOTIDE SEQUENCE [LARGE SCALE GENOMIC DNA]</scope>
    <source>
        <strain>1106a</strain>
    </source>
</reference>
<accession>A3NY10</accession>
<proteinExistence type="inferred from homology"/>
<sequence length="338" mass="37377">MSITRRTTLSKYLIEQQRETHNLPADLRLLIEVVARACKAISYNVSKGALGDALGTAGSENVQGEVQKKLDILSNEILLDANEWGGNLAAMASEEMETFFPIPANYPRGEYLLVFDPLDGSSNIDVNVSIGTIFSVLRCPDGQQATEQSFLQPGTEQVAAGYAVYGPQTVFVLTTGNGVNCFTLDREVGSWVLTQSNLRIPEDTREYAINASNARHWYEPVKRYIDELNAGAEGPRGENFNMRWIASMVADVHRILNRGGIFMYPADKRTPDRPGKLRLMYEANPMSFIVEQAGGAATTGLKRILDVQPTGLHQRVPVILGSKNEVERVARYHEQAQS</sequence>
<evidence type="ECO:0000255" key="1">
    <source>
        <dbReference type="HAMAP-Rule" id="MF_01855"/>
    </source>
</evidence>
<dbReference type="EC" id="3.1.3.11" evidence="1"/>
<dbReference type="EMBL" id="CP000572">
    <property type="protein sequence ID" value="ABN90664.1"/>
    <property type="molecule type" value="Genomic_DNA"/>
</dbReference>
<dbReference type="RefSeq" id="WP_004189384.1">
    <property type="nucleotide sequence ID" value="NC_009076.1"/>
</dbReference>
<dbReference type="SMR" id="A3NY10"/>
<dbReference type="KEGG" id="bpl:BURPS1106A_2987"/>
<dbReference type="HOGENOM" id="CLU_039977_0_0_4"/>
<dbReference type="UniPathway" id="UPA00138"/>
<dbReference type="Proteomes" id="UP000006738">
    <property type="component" value="Chromosome I"/>
</dbReference>
<dbReference type="GO" id="GO:0005829">
    <property type="term" value="C:cytosol"/>
    <property type="evidence" value="ECO:0007669"/>
    <property type="project" value="TreeGrafter"/>
</dbReference>
<dbReference type="GO" id="GO:0042132">
    <property type="term" value="F:fructose 1,6-bisphosphate 1-phosphatase activity"/>
    <property type="evidence" value="ECO:0007669"/>
    <property type="project" value="UniProtKB-UniRule"/>
</dbReference>
<dbReference type="GO" id="GO:0000287">
    <property type="term" value="F:magnesium ion binding"/>
    <property type="evidence" value="ECO:0007669"/>
    <property type="project" value="UniProtKB-UniRule"/>
</dbReference>
<dbReference type="GO" id="GO:0030388">
    <property type="term" value="P:fructose 1,6-bisphosphate metabolic process"/>
    <property type="evidence" value="ECO:0007669"/>
    <property type="project" value="TreeGrafter"/>
</dbReference>
<dbReference type="GO" id="GO:0006002">
    <property type="term" value="P:fructose 6-phosphate metabolic process"/>
    <property type="evidence" value="ECO:0007669"/>
    <property type="project" value="TreeGrafter"/>
</dbReference>
<dbReference type="GO" id="GO:0006000">
    <property type="term" value="P:fructose metabolic process"/>
    <property type="evidence" value="ECO:0007669"/>
    <property type="project" value="TreeGrafter"/>
</dbReference>
<dbReference type="GO" id="GO:0006094">
    <property type="term" value="P:gluconeogenesis"/>
    <property type="evidence" value="ECO:0007669"/>
    <property type="project" value="UniProtKB-UniRule"/>
</dbReference>
<dbReference type="GO" id="GO:0005986">
    <property type="term" value="P:sucrose biosynthetic process"/>
    <property type="evidence" value="ECO:0007669"/>
    <property type="project" value="TreeGrafter"/>
</dbReference>
<dbReference type="CDD" id="cd00354">
    <property type="entry name" value="FBPase"/>
    <property type="match status" value="1"/>
</dbReference>
<dbReference type="FunFam" id="3.30.540.10:FF:000006">
    <property type="entry name" value="Fructose-1,6-bisphosphatase class 1"/>
    <property type="match status" value="1"/>
</dbReference>
<dbReference type="FunFam" id="3.40.190.80:FF:000011">
    <property type="entry name" value="Fructose-1,6-bisphosphatase class 1"/>
    <property type="match status" value="1"/>
</dbReference>
<dbReference type="Gene3D" id="3.40.190.80">
    <property type="match status" value="1"/>
</dbReference>
<dbReference type="Gene3D" id="3.30.540.10">
    <property type="entry name" value="Fructose-1,6-Bisphosphatase, subunit A, domain 1"/>
    <property type="match status" value="1"/>
</dbReference>
<dbReference type="HAMAP" id="MF_01855">
    <property type="entry name" value="FBPase_class1"/>
    <property type="match status" value="1"/>
</dbReference>
<dbReference type="InterPro" id="IPR044015">
    <property type="entry name" value="FBPase_C_dom"/>
</dbReference>
<dbReference type="InterPro" id="IPR000146">
    <property type="entry name" value="FBPase_class-1"/>
</dbReference>
<dbReference type="InterPro" id="IPR033391">
    <property type="entry name" value="FBPase_N"/>
</dbReference>
<dbReference type="InterPro" id="IPR028343">
    <property type="entry name" value="FBPtase"/>
</dbReference>
<dbReference type="NCBIfam" id="NF006778">
    <property type="entry name" value="PRK09293.1-1"/>
    <property type="match status" value="1"/>
</dbReference>
<dbReference type="NCBIfam" id="NF006779">
    <property type="entry name" value="PRK09293.1-3"/>
    <property type="match status" value="1"/>
</dbReference>
<dbReference type="NCBIfam" id="NF006780">
    <property type="entry name" value="PRK09293.1-4"/>
    <property type="match status" value="1"/>
</dbReference>
<dbReference type="PANTHER" id="PTHR11556">
    <property type="entry name" value="FRUCTOSE-1,6-BISPHOSPHATASE-RELATED"/>
    <property type="match status" value="1"/>
</dbReference>
<dbReference type="PANTHER" id="PTHR11556:SF35">
    <property type="entry name" value="SEDOHEPTULOSE-1,7-BISPHOSPHATASE, CHLOROPLASTIC"/>
    <property type="match status" value="1"/>
</dbReference>
<dbReference type="Pfam" id="PF00316">
    <property type="entry name" value="FBPase"/>
    <property type="match status" value="1"/>
</dbReference>
<dbReference type="Pfam" id="PF18913">
    <property type="entry name" value="FBPase_C"/>
    <property type="match status" value="1"/>
</dbReference>
<dbReference type="PIRSF" id="PIRSF500210">
    <property type="entry name" value="FBPtase"/>
    <property type="match status" value="1"/>
</dbReference>
<dbReference type="PIRSF" id="PIRSF000904">
    <property type="entry name" value="FBPtase_SBPase"/>
    <property type="match status" value="1"/>
</dbReference>
<dbReference type="PRINTS" id="PR00115">
    <property type="entry name" value="F16BPHPHTASE"/>
</dbReference>
<dbReference type="SUPFAM" id="SSF56655">
    <property type="entry name" value="Carbohydrate phosphatase"/>
    <property type="match status" value="1"/>
</dbReference>
<name>F16PA_BURP0</name>
<feature type="chain" id="PRO_0000364500" description="Fructose-1,6-bisphosphatase class 1">
    <location>
        <begin position="1"/>
        <end position="338"/>
    </location>
</feature>
<feature type="binding site" evidence="1">
    <location>
        <position position="94"/>
    </location>
    <ligand>
        <name>Mg(2+)</name>
        <dbReference type="ChEBI" id="CHEBI:18420"/>
        <label>1</label>
    </ligand>
</feature>
<feature type="binding site" evidence="1">
    <location>
        <position position="116"/>
    </location>
    <ligand>
        <name>Mg(2+)</name>
        <dbReference type="ChEBI" id="CHEBI:18420"/>
        <label>1</label>
    </ligand>
</feature>
<feature type="binding site" evidence="1">
    <location>
        <position position="116"/>
    </location>
    <ligand>
        <name>Mg(2+)</name>
        <dbReference type="ChEBI" id="CHEBI:18420"/>
        <label>2</label>
    </ligand>
</feature>
<feature type="binding site" evidence="1">
    <location>
        <position position="118"/>
    </location>
    <ligand>
        <name>Mg(2+)</name>
        <dbReference type="ChEBI" id="CHEBI:18420"/>
        <label>1</label>
    </ligand>
</feature>
<feature type="binding site" evidence="1">
    <location>
        <begin position="119"/>
        <end position="122"/>
    </location>
    <ligand>
        <name>substrate</name>
    </ligand>
</feature>
<feature type="binding site" evidence="1">
    <location>
        <position position="119"/>
    </location>
    <ligand>
        <name>Mg(2+)</name>
        <dbReference type="ChEBI" id="CHEBI:18420"/>
        <label>2</label>
    </ligand>
</feature>
<feature type="binding site" evidence="1">
    <location>
        <position position="210"/>
    </location>
    <ligand>
        <name>substrate</name>
    </ligand>
</feature>
<feature type="binding site" evidence="1">
    <location>
        <position position="276"/>
    </location>
    <ligand>
        <name>substrate</name>
    </ligand>
</feature>
<feature type="binding site" evidence="1">
    <location>
        <position position="282"/>
    </location>
    <ligand>
        <name>Mg(2+)</name>
        <dbReference type="ChEBI" id="CHEBI:18420"/>
        <label>2</label>
    </ligand>
</feature>
<protein>
    <recommendedName>
        <fullName evidence="1">Fructose-1,6-bisphosphatase class 1</fullName>
        <shortName evidence="1">FBPase class 1</shortName>
        <ecNumber evidence="1">3.1.3.11</ecNumber>
    </recommendedName>
    <alternativeName>
        <fullName evidence="1">D-fructose-1,6-bisphosphate 1-phosphohydrolase class 1</fullName>
    </alternativeName>
</protein>
<gene>
    <name evidence="1" type="primary">fbp</name>
    <name type="ordered locus">BURPS1106A_2987</name>
</gene>
<keyword id="KW-0119">Carbohydrate metabolism</keyword>
<keyword id="KW-0963">Cytoplasm</keyword>
<keyword id="KW-0378">Hydrolase</keyword>
<keyword id="KW-0460">Magnesium</keyword>
<keyword id="KW-0479">Metal-binding</keyword>
<comment type="catalytic activity">
    <reaction evidence="1">
        <text>beta-D-fructose 1,6-bisphosphate + H2O = beta-D-fructose 6-phosphate + phosphate</text>
        <dbReference type="Rhea" id="RHEA:11064"/>
        <dbReference type="ChEBI" id="CHEBI:15377"/>
        <dbReference type="ChEBI" id="CHEBI:32966"/>
        <dbReference type="ChEBI" id="CHEBI:43474"/>
        <dbReference type="ChEBI" id="CHEBI:57634"/>
        <dbReference type="EC" id="3.1.3.11"/>
    </reaction>
</comment>
<comment type="cofactor">
    <cofactor evidence="1">
        <name>Mg(2+)</name>
        <dbReference type="ChEBI" id="CHEBI:18420"/>
    </cofactor>
    <text evidence="1">Binds 2 magnesium ions per subunit.</text>
</comment>
<comment type="pathway">
    <text evidence="1">Carbohydrate biosynthesis; gluconeogenesis.</text>
</comment>
<comment type="subunit">
    <text evidence="1">Homotetramer.</text>
</comment>
<comment type="subcellular location">
    <subcellularLocation>
        <location evidence="1">Cytoplasm</location>
    </subcellularLocation>
</comment>
<comment type="similarity">
    <text evidence="1">Belongs to the FBPase class 1 family.</text>
</comment>